<dbReference type="EC" id="2.3.1.57" evidence="4"/>
<dbReference type="EMBL" id="AE003853">
    <property type="protein sequence ID" value="AAF96843.1"/>
    <property type="molecule type" value="Genomic_DNA"/>
</dbReference>
<dbReference type="PIR" id="B82398">
    <property type="entry name" value="B82398"/>
</dbReference>
<dbReference type="RefSeq" id="NP_233331.1">
    <property type="nucleotide sequence ID" value="NC_002506.1"/>
</dbReference>
<dbReference type="RefSeq" id="WP_001088091.1">
    <property type="nucleotide sequence ID" value="NZ_LT906615.1"/>
</dbReference>
<dbReference type="PDB" id="4JJX">
    <property type="method" value="X-ray"/>
    <property type="resolution" value="2.83 A"/>
    <property type="chains" value="A/B/C=1-173"/>
</dbReference>
<dbReference type="PDB" id="4JLY">
    <property type="method" value="X-ray"/>
    <property type="resolution" value="2.88 A"/>
    <property type="chains" value="A/B/C/D/E/F=1-173"/>
</dbReference>
<dbReference type="PDB" id="4MHD">
    <property type="method" value="X-ray"/>
    <property type="resolution" value="2.32 A"/>
    <property type="chains" value="A/B/C=1-173"/>
</dbReference>
<dbReference type="PDB" id="4MI4">
    <property type="method" value="X-ray"/>
    <property type="resolution" value="1.85 A"/>
    <property type="chains" value="A/B/C=1-173"/>
</dbReference>
<dbReference type="PDB" id="4MJ8">
    <property type="method" value="X-ray"/>
    <property type="resolution" value="2.04 A"/>
    <property type="chains" value="A/B/C=1-173"/>
</dbReference>
<dbReference type="PDB" id="4NCZ">
    <property type="method" value="X-ray"/>
    <property type="resolution" value="1.89 A"/>
    <property type="chains" value="A/B/C=1-173"/>
</dbReference>
<dbReference type="PDB" id="4R57">
    <property type="method" value="X-ray"/>
    <property type="resolution" value="2.08 A"/>
    <property type="chains" value="A/B/C/D/E/F/G/H/I/J/K/L=1-173"/>
</dbReference>
<dbReference type="PDB" id="4R87">
    <property type="method" value="X-ray"/>
    <property type="resolution" value="2.61 A"/>
    <property type="chains" value="A/B/C/D/E/F/G/H/I/J/K/L=1-173"/>
</dbReference>
<dbReference type="PDB" id="4YGO">
    <property type="method" value="X-ray"/>
    <property type="resolution" value="2.50 A"/>
    <property type="chains" value="A/B/C/D/E/F=1-173"/>
</dbReference>
<dbReference type="PDB" id="5CNP">
    <property type="method" value="X-ray"/>
    <property type="resolution" value="2.38 A"/>
    <property type="chains" value="A/B/C/D/E/F=1-173"/>
</dbReference>
<dbReference type="PDB" id="5UG4">
    <property type="method" value="X-ray"/>
    <property type="resolution" value="2.15 A"/>
    <property type="chains" value="A/B/C=1-173"/>
</dbReference>
<dbReference type="PDB" id="6CX8">
    <property type="method" value="X-ray"/>
    <property type="resolution" value="2.41 A"/>
    <property type="chains" value="A/B/C/D/E/F=1-173"/>
</dbReference>
<dbReference type="PDB" id="6DAU">
    <property type="method" value="X-ray"/>
    <property type="resolution" value="2.26 A"/>
    <property type="chains" value="A/B/C/D/E/F=1-173"/>
</dbReference>
<dbReference type="PDB" id="6E1X">
    <property type="method" value="X-ray"/>
    <property type="resolution" value="1.35 A"/>
    <property type="chains" value="A/B/C/D/E/F=1-173"/>
</dbReference>
<dbReference type="PDB" id="7KWH">
    <property type="method" value="X-ray"/>
    <property type="resolution" value="2.90 A"/>
    <property type="chains" value="A/B/C/D/E/F/G/H/I/J/K/L=1-173"/>
</dbReference>
<dbReference type="PDB" id="7KWJ">
    <property type="method" value="X-ray"/>
    <property type="resolution" value="2.58 A"/>
    <property type="chains" value="A/B/C=1-173"/>
</dbReference>
<dbReference type="PDB" id="7KWQ">
    <property type="method" value="X-ray"/>
    <property type="resolution" value="2.30 A"/>
    <property type="chains" value="A/B/C=1-173"/>
</dbReference>
<dbReference type="PDB" id="7KWX">
    <property type="method" value="X-ray"/>
    <property type="resolution" value="2.42 A"/>
    <property type="chains" value="A/B/C=1-173"/>
</dbReference>
<dbReference type="PDB" id="7KX2">
    <property type="method" value="X-ray"/>
    <property type="resolution" value="2.60 A"/>
    <property type="chains" value="A/B/C=1-173"/>
</dbReference>
<dbReference type="PDB" id="7KX3">
    <property type="method" value="X-ray"/>
    <property type="resolution" value="2.67 A"/>
    <property type="chains" value="A/B/C=1-173"/>
</dbReference>
<dbReference type="PDBsum" id="4JJX"/>
<dbReference type="PDBsum" id="4JLY"/>
<dbReference type="PDBsum" id="4MHD"/>
<dbReference type="PDBsum" id="4MI4"/>
<dbReference type="PDBsum" id="4MJ8"/>
<dbReference type="PDBsum" id="4NCZ"/>
<dbReference type="PDBsum" id="4R57"/>
<dbReference type="PDBsum" id="4R87"/>
<dbReference type="PDBsum" id="4YGO"/>
<dbReference type="PDBsum" id="5CNP"/>
<dbReference type="PDBsum" id="5UG4"/>
<dbReference type="PDBsum" id="6CX8"/>
<dbReference type="PDBsum" id="6DAU"/>
<dbReference type="PDBsum" id="6E1X"/>
<dbReference type="PDBsum" id="7KWH"/>
<dbReference type="PDBsum" id="7KWJ"/>
<dbReference type="PDBsum" id="7KWQ"/>
<dbReference type="PDBsum" id="7KWX"/>
<dbReference type="PDBsum" id="7KX2"/>
<dbReference type="PDBsum" id="7KX3"/>
<dbReference type="SMR" id="Q9KL03"/>
<dbReference type="STRING" id="243277.VC_A0947"/>
<dbReference type="DNASU" id="2612395"/>
<dbReference type="EnsemblBacteria" id="AAF96843">
    <property type="protein sequence ID" value="AAF96843"/>
    <property type="gene ID" value="VC_A0947"/>
</dbReference>
<dbReference type="GeneID" id="88784323"/>
<dbReference type="KEGG" id="vch:VC_A0947"/>
<dbReference type="PATRIC" id="fig|243277.26.peg.3559"/>
<dbReference type="eggNOG" id="COG1670">
    <property type="taxonomic scope" value="Bacteria"/>
</dbReference>
<dbReference type="HOGENOM" id="CLU_013985_3_2_6"/>
<dbReference type="BRENDA" id="2.3.1.57">
    <property type="organism ID" value="6626"/>
</dbReference>
<dbReference type="UniPathway" id="UPA00211"/>
<dbReference type="UniPathway" id="UPA00250"/>
<dbReference type="EvolutionaryTrace" id="Q9KL03"/>
<dbReference type="Proteomes" id="UP000000584">
    <property type="component" value="Chromosome 2"/>
</dbReference>
<dbReference type="GO" id="GO:0005737">
    <property type="term" value="C:cytoplasm"/>
    <property type="evidence" value="ECO:0007669"/>
    <property type="project" value="UniProtKB-SubCell"/>
</dbReference>
<dbReference type="GO" id="GO:0004145">
    <property type="term" value="F:diamine N-acetyltransferase activity"/>
    <property type="evidence" value="ECO:0000314"/>
    <property type="project" value="UniProtKB"/>
</dbReference>
<dbReference type="GO" id="GO:0000287">
    <property type="term" value="F:magnesium ion binding"/>
    <property type="evidence" value="ECO:0000314"/>
    <property type="project" value="UniProtKB"/>
</dbReference>
<dbReference type="GO" id="GO:0006598">
    <property type="term" value="P:polyamine catabolic process"/>
    <property type="evidence" value="ECO:0000303"/>
    <property type="project" value="UniProtKB"/>
</dbReference>
<dbReference type="GO" id="GO:0046203">
    <property type="term" value="P:spermidine catabolic process"/>
    <property type="evidence" value="ECO:0007669"/>
    <property type="project" value="UniProtKB-UniPathway"/>
</dbReference>
<dbReference type="GO" id="GO:0046208">
    <property type="term" value="P:spermine catabolic process"/>
    <property type="evidence" value="ECO:0007669"/>
    <property type="project" value="UniProtKB-UniPathway"/>
</dbReference>
<dbReference type="CDD" id="cd04301">
    <property type="entry name" value="NAT_SF"/>
    <property type="match status" value="1"/>
</dbReference>
<dbReference type="FunFam" id="3.40.630.30:FF:000007">
    <property type="entry name" value="Spermidine N(1)-acetyltransferase"/>
    <property type="match status" value="1"/>
</dbReference>
<dbReference type="Gene3D" id="3.40.630.30">
    <property type="match status" value="1"/>
</dbReference>
<dbReference type="InterPro" id="IPR016181">
    <property type="entry name" value="Acyl_CoA_acyltransferase"/>
</dbReference>
<dbReference type="InterPro" id="IPR000182">
    <property type="entry name" value="GNAT_dom"/>
</dbReference>
<dbReference type="NCBIfam" id="NF011709">
    <property type="entry name" value="PRK15130.1"/>
    <property type="match status" value="1"/>
</dbReference>
<dbReference type="PANTHER" id="PTHR43415">
    <property type="entry name" value="SPERMIDINE N(1)-ACETYLTRANSFERASE"/>
    <property type="match status" value="1"/>
</dbReference>
<dbReference type="PANTHER" id="PTHR43415:SF6">
    <property type="entry name" value="SPERMIDINE N(1)-ACETYLTRANSFERASE"/>
    <property type="match status" value="1"/>
</dbReference>
<dbReference type="Pfam" id="PF00583">
    <property type="entry name" value="Acetyltransf_1"/>
    <property type="match status" value="1"/>
</dbReference>
<dbReference type="SUPFAM" id="SSF55729">
    <property type="entry name" value="Acyl-CoA N-acyltransferases (Nat)"/>
    <property type="match status" value="1"/>
</dbReference>
<dbReference type="PROSITE" id="PS51186">
    <property type="entry name" value="GNAT"/>
    <property type="match status" value="1"/>
</dbReference>
<name>ATDA_VIBCH</name>
<keyword id="KW-0002">3D-structure</keyword>
<keyword id="KW-0012">Acyltransferase</keyword>
<keyword id="KW-0963">Cytoplasm</keyword>
<keyword id="KW-0460">Magnesium</keyword>
<keyword id="KW-0479">Metal-binding</keyword>
<keyword id="KW-1185">Reference proteome</keyword>
<keyword id="KW-0808">Transferase</keyword>
<organism>
    <name type="scientific">Vibrio cholerae serotype O1 (strain ATCC 39315 / El Tor Inaba N16961)</name>
    <dbReference type="NCBI Taxonomy" id="243277"/>
    <lineage>
        <taxon>Bacteria</taxon>
        <taxon>Pseudomonadati</taxon>
        <taxon>Pseudomonadota</taxon>
        <taxon>Gammaproteobacteria</taxon>
        <taxon>Vibrionales</taxon>
        <taxon>Vibrionaceae</taxon>
        <taxon>Vibrio</taxon>
    </lineage>
</organism>
<evidence type="ECO:0000250" key="1">
    <source>
        <dbReference type="UniProtKB" id="P0A951"/>
    </source>
</evidence>
<evidence type="ECO:0000255" key="2">
    <source>
        <dbReference type="PROSITE-ProRule" id="PRU00532"/>
    </source>
</evidence>
<evidence type="ECO:0000269" key="3">
    <source>
    </source>
</evidence>
<evidence type="ECO:0000269" key="4">
    <source>
    </source>
</evidence>
<evidence type="ECO:0000269" key="5">
    <source>
    </source>
</evidence>
<evidence type="ECO:0000269" key="6">
    <source ref="3"/>
</evidence>
<evidence type="ECO:0000303" key="7">
    <source>
    </source>
</evidence>
<evidence type="ECO:0000303" key="8">
    <source>
    </source>
</evidence>
<evidence type="ECO:0000305" key="9"/>
<evidence type="ECO:0000305" key="10">
    <source>
    </source>
</evidence>
<evidence type="ECO:0007744" key="11">
    <source>
        <dbReference type="PDB" id="4JJX"/>
    </source>
</evidence>
<evidence type="ECO:0007744" key="12">
    <source>
        <dbReference type="PDB" id="4JLY"/>
    </source>
</evidence>
<evidence type="ECO:0007744" key="13">
    <source>
        <dbReference type="PDB" id="4MHD"/>
    </source>
</evidence>
<evidence type="ECO:0007744" key="14">
    <source>
        <dbReference type="PDB" id="4MI4"/>
    </source>
</evidence>
<evidence type="ECO:0007744" key="15">
    <source>
        <dbReference type="PDB" id="4MJ8"/>
    </source>
</evidence>
<evidence type="ECO:0007744" key="16">
    <source>
        <dbReference type="PDB" id="4NCZ"/>
    </source>
</evidence>
<evidence type="ECO:0007744" key="17">
    <source>
        <dbReference type="PDB" id="4R57"/>
    </source>
</evidence>
<evidence type="ECO:0007744" key="18">
    <source>
        <dbReference type="PDB" id="4R87"/>
    </source>
</evidence>
<evidence type="ECO:0007744" key="19">
    <source>
        <dbReference type="PDB" id="4YGO"/>
    </source>
</evidence>
<evidence type="ECO:0007744" key="20">
    <source>
        <dbReference type="PDB" id="5CNP"/>
    </source>
</evidence>
<evidence type="ECO:0007829" key="21">
    <source>
        <dbReference type="PDB" id="4NCZ"/>
    </source>
</evidence>
<evidence type="ECO:0007829" key="22">
    <source>
        <dbReference type="PDB" id="4R57"/>
    </source>
</evidence>
<evidence type="ECO:0007829" key="23">
    <source>
        <dbReference type="PDB" id="5CNP"/>
    </source>
</evidence>
<evidence type="ECO:0007829" key="24">
    <source>
        <dbReference type="PDB" id="6E1X"/>
    </source>
</evidence>
<accession>Q9KL03</accession>
<comment type="function">
    <text evidence="3 4">Involved in the protection against polyamine toxicity by regulating their concentration. Catalyzes the transfer of an acetyl group from acetyl coenzyme A (AcCoA) to the primary amino groups of spermidine to yield N(1)- and N(8)-acetylspermidine. It can use polyamines such as spermine and N(1)-acetylspermine, but not putrescine or cadaverine.</text>
</comment>
<comment type="catalytic activity">
    <reaction evidence="4">
        <text>an alkane-alpha,omega-diamine + acetyl-CoA = an N-acetylalkane-alpha,omega-diamine + CoA + H(+)</text>
        <dbReference type="Rhea" id="RHEA:11116"/>
        <dbReference type="Rhea" id="RHEA-COMP:9766"/>
        <dbReference type="Rhea" id="RHEA-COMP:9767"/>
        <dbReference type="ChEBI" id="CHEBI:15378"/>
        <dbReference type="ChEBI" id="CHEBI:57287"/>
        <dbReference type="ChEBI" id="CHEBI:57288"/>
        <dbReference type="ChEBI" id="CHEBI:70977"/>
        <dbReference type="ChEBI" id="CHEBI:70988"/>
        <dbReference type="EC" id="2.3.1.57"/>
    </reaction>
</comment>
<comment type="catalytic activity">
    <reaction evidence="4">
        <text>spermidine + acetyl-CoA = N(1)-acetylspermidine + CoA + H(+)</text>
        <dbReference type="Rhea" id="RHEA:28150"/>
        <dbReference type="ChEBI" id="CHEBI:15378"/>
        <dbReference type="ChEBI" id="CHEBI:57287"/>
        <dbReference type="ChEBI" id="CHEBI:57288"/>
        <dbReference type="ChEBI" id="CHEBI:57834"/>
        <dbReference type="ChEBI" id="CHEBI:58324"/>
        <dbReference type="EC" id="2.3.1.57"/>
    </reaction>
</comment>
<comment type="catalytic activity">
    <reaction evidence="4">
        <text>spermidine + acetyl-CoA = N(8)-acetylspermidine + CoA + H(+)</text>
        <dbReference type="Rhea" id="RHEA:28270"/>
        <dbReference type="ChEBI" id="CHEBI:15378"/>
        <dbReference type="ChEBI" id="CHEBI:57287"/>
        <dbReference type="ChEBI" id="CHEBI:57288"/>
        <dbReference type="ChEBI" id="CHEBI:57834"/>
        <dbReference type="ChEBI" id="CHEBI:58535"/>
        <dbReference type="EC" id="2.3.1.57"/>
    </reaction>
</comment>
<comment type="catalytic activity">
    <reaction evidence="4">
        <text>spermine + acetyl-CoA = N(1)-acetylspermine + CoA + H(+)</text>
        <dbReference type="Rhea" id="RHEA:33099"/>
        <dbReference type="ChEBI" id="CHEBI:15378"/>
        <dbReference type="ChEBI" id="CHEBI:45725"/>
        <dbReference type="ChEBI" id="CHEBI:57287"/>
        <dbReference type="ChEBI" id="CHEBI:57288"/>
        <dbReference type="ChEBI" id="CHEBI:58101"/>
        <dbReference type="EC" id="2.3.1.57"/>
    </reaction>
</comment>
<comment type="activity regulation">
    <text evidence="4 5">Allosterically regulated by polyamines (PubMed:25623305, PubMed:26410587). Polyamines trigger conformational changes and induce the symmetric closed dodecameric state of the protein when they bind to their allosteric sites (PubMed:26410587).</text>
</comment>
<comment type="biophysicochemical properties">
    <kinetics>
        <KM evidence="4">99 uM for spermine (in the presence of 100 uM AcCoA at pH 9 and 37 degrees Celsius)</KM>
        <KM evidence="4">554 uM for spermidine (in the presence of 100 uM AcCoA at pH 9 and 37 degrees Celsius)</KM>
        <KM evidence="4">1210 uM for AcCoA (in the presence of 3 mM spermine at pH 9 and 37 degrees Celsius)</KM>
        <Vmax evidence="4">48.1 umol/min/mg enzyme with AcCoA as substrate (in the presence of 500 uM spermine at pH 9 and 37 degrees Celsius)</Vmax>
        <Vmax evidence="4">19.4 umol/min/mg enzyme with spermine as substrate (in the presence of 100 uM AcCoA at pH 9 and 37 degrees Celsius)</Vmax>
        <Vmax evidence="4">18.8 umol/min/mg enzyme with spermidine as substrate (in the presence of 100 uM AcCoA at pH 9 and 37 degrees Celsius)</Vmax>
        <text evidence="4">kcat is 16.8 sec(-1) for acetyltransferase activity with AcCoA as substrate (in the presence of 500 uM spermine at pH 9 and 37 degrees Celsius). kcat is 6.79 sec(-1) for acetyltransferase activity with spermine as substrate (in the presence of 100 uM AcCoA at pH 9 and 37 degrees Celsius). kcat is 6.58 sec(-1) for acetyltransferase activity with spermidine as substrate (in the presence of 100 uM AcCoA at pH 9 and 37 degrees Celsius).</text>
    </kinetics>
</comment>
<comment type="pathway">
    <text evidence="9">Amine and polyamine degradation; spermidine degradation.</text>
</comment>
<comment type="pathway">
    <text evidence="9">Amine and polyamine degradation; spermine degradation.</text>
</comment>
<comment type="subunit">
    <text evidence="4 5">Homododecamer; dimer of hexamers (PubMed:25623305, PubMed:26410587). Exists in solution in a variety of protein homooligomeric states including dodecamers in an open state. The presence of the polyamines spermidine or spermine shifts the equilibrium to dodecamers and induces the formation of the closed, symmetric dodecamers (PubMed:26410587).</text>
</comment>
<comment type="subcellular location">
    <subcellularLocation>
        <location evidence="9">Cytoplasm</location>
    </subcellularLocation>
</comment>
<comment type="similarity">
    <text evidence="9">Belongs to the acetyltransferase family.</text>
</comment>
<sequence length="173" mass="20675">MNSQLTLRALERGDLRFIHNLNNNRNIMSYWFEEPYESFDELEELYNKHIHDNAERRFVVEDAQKNLIGLVELIEINYIHRSAEFQIIIAPEHQGKGFARTLINRALDYSFTILNLHKIYLHVAVENPKAVHLYEECGFVEEGHLVEEFFINGRYQDVKRMYILQSKYLNRSE</sequence>
<proteinExistence type="evidence at protein level"/>
<gene>
    <name type="primary">speG</name>
    <name type="ordered locus">VC_A0947</name>
</gene>
<protein>
    <recommendedName>
        <fullName evidence="8">Spermidine N(1)-acetyltransferase</fullName>
        <shortName evidence="8">SAT</shortName>
        <ecNumber evidence="4">2.3.1.57</ecNumber>
    </recommendedName>
    <alternativeName>
        <fullName evidence="7">Spermidine/spermine N(1)-acetyltransferase</fullName>
        <shortName evidence="7">SSAT</shortName>
    </alternativeName>
</protein>
<feature type="chain" id="PRO_0000433302" description="Spermidine N(1)-acetyltransferase">
    <location>
        <begin position="1"/>
        <end position="173"/>
    </location>
</feature>
<feature type="domain" description="N-acetyltransferase" evidence="2">
    <location>
        <begin position="5"/>
        <end position="162"/>
    </location>
</feature>
<feature type="active site" description="Proton donor" evidence="1">
    <location>
        <position position="134"/>
    </location>
</feature>
<feature type="binding site" evidence="4 6 15">
    <location>
        <position position="28"/>
    </location>
    <ligand>
        <name>spermine</name>
        <dbReference type="ChEBI" id="CHEBI:45725"/>
    </ligand>
</feature>
<feature type="binding site" evidence="4 5 20">
    <location>
        <position position="33"/>
    </location>
    <ligand>
        <name>Mg(2+)</name>
        <dbReference type="ChEBI" id="CHEBI:18420"/>
    </ligand>
</feature>
<feature type="binding site" evidence="4 13">
    <location>
        <position position="33"/>
    </location>
    <ligand>
        <name>spermidine</name>
        <dbReference type="ChEBI" id="CHEBI:57834"/>
    </ligand>
</feature>
<feature type="binding site" evidence="4 14">
    <location>
        <position position="33"/>
    </location>
    <ligand>
        <name>spermine</name>
        <dbReference type="ChEBI" id="CHEBI:45725"/>
    </ligand>
</feature>
<feature type="binding site" evidence="4 13">
    <location>
        <position position="41"/>
    </location>
    <ligand>
        <name>spermidine</name>
        <dbReference type="ChEBI" id="CHEBI:57834"/>
    </ligand>
</feature>
<feature type="binding site" evidence="4 14 18">
    <location>
        <position position="41"/>
    </location>
    <ligand>
        <name>spermine</name>
        <dbReference type="ChEBI" id="CHEBI:45725"/>
    </ligand>
</feature>
<feature type="binding site" evidence="4 18">
    <location>
        <begin position="49"/>
        <end position="52"/>
    </location>
    <ligand>
        <name>spermine</name>
        <dbReference type="ChEBI" id="CHEBI:45725"/>
    </ligand>
</feature>
<feature type="binding site" evidence="4 5 20">
    <location>
        <position position="75"/>
    </location>
    <ligand>
        <name>Mg(2+)</name>
        <dbReference type="ChEBI" id="CHEBI:18420"/>
    </ligand>
</feature>
<feature type="binding site" evidence="4 6 15">
    <location>
        <begin position="84"/>
        <end position="86"/>
    </location>
    <ligand>
        <name>spermine</name>
        <dbReference type="ChEBI" id="CHEBI:45725"/>
    </ligand>
</feature>
<feature type="binding site" evidence="4 17 18">
    <location>
        <begin position="87"/>
        <end position="89"/>
    </location>
    <ligand>
        <name>acetyl-CoA</name>
        <dbReference type="ChEBI" id="CHEBI:57288"/>
    </ligand>
</feature>
<feature type="binding site" evidence="4 17 18">
    <location>
        <begin position="94"/>
        <end position="100"/>
    </location>
    <ligand>
        <name>acetyl-CoA</name>
        <dbReference type="ChEBI" id="CHEBI:57288"/>
    </ligand>
</feature>
<feature type="binding site" evidence="4 17">
    <location>
        <begin position="127"/>
        <end position="136"/>
    </location>
    <ligand>
        <name>acetyl-CoA</name>
        <dbReference type="ChEBI" id="CHEBI:57288"/>
    </ligand>
</feature>
<feature type="site" description="Could be important for selectivity toward long polyamines" evidence="10">
    <location>
        <position position="84"/>
    </location>
</feature>
<feature type="helix" evidence="23">
    <location>
        <begin position="2"/>
        <end position="4"/>
    </location>
</feature>
<feature type="strand" evidence="24">
    <location>
        <begin position="6"/>
        <end position="9"/>
    </location>
</feature>
<feature type="helix" evidence="24">
    <location>
        <begin position="12"/>
        <end position="14"/>
    </location>
</feature>
<feature type="helix" evidence="24">
    <location>
        <begin position="15"/>
        <end position="22"/>
    </location>
</feature>
<feature type="helix" evidence="24">
    <location>
        <begin position="25"/>
        <end position="29"/>
    </location>
</feature>
<feature type="turn" evidence="24">
    <location>
        <begin position="30"/>
        <end position="32"/>
    </location>
</feature>
<feature type="strand" evidence="21">
    <location>
        <begin position="34"/>
        <end position="36"/>
    </location>
</feature>
<feature type="helix" evidence="24">
    <location>
        <begin position="39"/>
        <end position="48"/>
    </location>
</feature>
<feature type="turn" evidence="24">
    <location>
        <begin position="49"/>
        <end position="51"/>
    </location>
</feature>
<feature type="strand" evidence="24">
    <location>
        <begin position="56"/>
        <end position="61"/>
    </location>
</feature>
<feature type="strand" evidence="24">
    <location>
        <begin position="67"/>
        <end position="75"/>
    </location>
</feature>
<feature type="turn" evidence="24">
    <location>
        <begin position="78"/>
        <end position="80"/>
    </location>
</feature>
<feature type="strand" evidence="24">
    <location>
        <begin position="82"/>
        <end position="89"/>
    </location>
</feature>
<feature type="helix" evidence="24">
    <location>
        <begin position="91"/>
        <end position="93"/>
    </location>
</feature>
<feature type="strand" evidence="22">
    <location>
        <begin position="95"/>
        <end position="97"/>
    </location>
</feature>
<feature type="helix" evidence="24">
    <location>
        <begin position="99"/>
        <end position="112"/>
    </location>
</feature>
<feature type="strand" evidence="24">
    <location>
        <begin position="117"/>
        <end position="124"/>
    </location>
</feature>
<feature type="helix" evidence="24">
    <location>
        <begin position="128"/>
        <end position="136"/>
    </location>
</feature>
<feature type="strand" evidence="24">
    <location>
        <begin position="140"/>
        <end position="151"/>
    </location>
</feature>
<feature type="strand" evidence="24">
    <location>
        <begin position="154"/>
        <end position="164"/>
    </location>
</feature>
<feature type="helix" evidence="24">
    <location>
        <begin position="165"/>
        <end position="169"/>
    </location>
</feature>
<reference key="1">
    <citation type="journal article" date="2000" name="Nature">
        <title>DNA sequence of both chromosomes of the cholera pathogen Vibrio cholerae.</title>
        <authorList>
            <person name="Heidelberg J.F."/>
            <person name="Eisen J.A."/>
            <person name="Nelson W.C."/>
            <person name="Clayton R.A."/>
            <person name="Gwinn M.L."/>
            <person name="Dodson R.J."/>
            <person name="Haft D.H."/>
            <person name="Hickey E.K."/>
            <person name="Peterson J.D."/>
            <person name="Umayam L.A."/>
            <person name="Gill S.R."/>
            <person name="Nelson K.E."/>
            <person name="Read T.D."/>
            <person name="Tettelin H."/>
            <person name="Richardson D.L."/>
            <person name="Ermolaeva M.D."/>
            <person name="Vamathevan J.J."/>
            <person name="Bass S."/>
            <person name="Qin H."/>
            <person name="Dragoi I."/>
            <person name="Sellers P."/>
            <person name="McDonald L.A."/>
            <person name="Utterback T.R."/>
            <person name="Fleischmann R.D."/>
            <person name="Nierman W.C."/>
            <person name="White O."/>
            <person name="Salzberg S.L."/>
            <person name="Smith H.O."/>
            <person name="Colwell R.R."/>
            <person name="Mekalanos J.J."/>
            <person name="Venter J.C."/>
            <person name="Fraser C.M."/>
        </authorList>
    </citation>
    <scope>NUCLEOTIDE SEQUENCE [LARGE SCALE GENOMIC DNA]</scope>
    <source>
        <strain>ATCC 39315 / El Tor Inaba N16961</strain>
    </source>
</reference>
<reference key="2">
    <citation type="journal article" date="2013" name="Protein Sci.">
        <title>Broad-substrate screen as a tool to identify substrates for bacterial Gcn5-related N-acetyltransferases with unknown substrate specificity.</title>
        <authorList>
            <person name="Kuhn M.L."/>
            <person name="Majorek K.A."/>
            <person name="Minor W."/>
            <person name="Anderson W.F."/>
        </authorList>
    </citation>
    <scope>FUNCTION</scope>
    <scope>SUBSTRATE SPECIFICITY</scope>
</reference>
<reference evidence="15" key="3">
    <citation type="submission" date="2013-09" db="PDB data bank">
        <title>Crystal structure of spermidine N-acetyltransferase from Vibrio cholerae in complex with polyamine.</title>
        <authorList>
            <person name="Filippova E.V."/>
            <person name="Minasov G."/>
            <person name="Shuvalova L."/>
            <person name="Kiryukhina O."/>
            <person name="Kuhn M.L."/>
            <person name="Anderson W.F."/>
        </authorList>
    </citation>
    <scope>X-RAY CRYSTALLOGRAPHY (2.04 ANGSTROMS) IN COMPLEX WITH SPERMINE</scope>
</reference>
<reference evidence="11 13 14 16 17 18" key="4">
    <citation type="journal article" date="2015" name="J. Mol. Biol.">
        <title>A novel polyamine allosteric site of SpeG from Vibrio cholerae is revealed by its dodecameric structure.</title>
        <authorList>
            <person name="Filippova E.V."/>
            <person name="Kuhn M.L."/>
            <person name="Osipiuk J."/>
            <person name="Kiryukhina O."/>
            <person name="Joachimiak A."/>
            <person name="Ballicora M.A."/>
            <person name="Anderson W.F."/>
        </authorList>
    </citation>
    <scope>X-RAY CRYSTALLOGRAPHY (1.85 ANGSTROMS) IN COMPLEX WITH SUBSTRATES AND CALCIUM</scope>
    <scope>FUNCTION</scope>
    <scope>CATALYTIC ACTIVITY</scope>
    <scope>BIOPHYSICOCHEMICAL PROPERTIES</scope>
    <scope>ACTIVITY REGULATION</scope>
    <scope>SUBUNIT</scope>
    <scope>SUBSTRATE SPECIFICITY</scope>
    <scope>REACTION MECHANISM</scope>
</reference>
<reference evidence="12 19 20" key="5">
    <citation type="journal article" date="2015" name="J. Mol. Biol.">
        <title>Substrate-induced allosteric change in the quaternary structure of the spermidine N-acetyltransferase SpeG.</title>
        <authorList>
            <person name="Filippova E.V."/>
            <person name="Weigand S."/>
            <person name="Osipiuk J."/>
            <person name="Kiryukhina O."/>
            <person name="Joachimiak A."/>
            <person name="Anderson W.F."/>
        </authorList>
    </citation>
    <scope>X-RAY CRYSTALLOGRAPHY (2.38 ANGSTROMS) IN COMPLEX WITH CALCIUM AND MAGNESIUM</scope>
    <scope>SUBUNIT</scope>
</reference>